<name>HISX_LEGPA</name>
<proteinExistence type="inferred from homology"/>
<sequence length="431" mass="46978">MLTIKNWQLLSDNDKRRCLSRPRDNSAIKENVLEIINQVQLSGDKALYDLTKRFDRVNLQYLQISQEKIRQASIPQNALIAIKQAIETISSYHQFLLPENTEISTASGITIRNVYRPIQKVGLYVPGGNKTPLVSSLLMQAIPAKVAGCPIKVLCTPPDAEGEINEHILVAARLCGIDTIYAIGGAQAIAAMAYGTESVIKVDKIFGPGNSYVTQAKTLVAIDADGAAIDMPAGPSEVMILADTEANPEFIAADLLAQAEHGPDSQVILICDECELANQVNQQLEIQMSYLSRIEFIKQSLTNSRIIICSNQSEQLDIINSYAPEHLIINRKNPEPWVEKIVAAGTVFLGSWAAETMGDYVTGSNHVLPTSGFARNHSGLSTLDFMTRFTVQAINQEAIRNLGPAAMTLAELEGLDAHANAVQIRLNTLGD</sequence>
<evidence type="ECO:0000255" key="1">
    <source>
        <dbReference type="HAMAP-Rule" id="MF_01024"/>
    </source>
</evidence>
<dbReference type="EC" id="1.1.1.23" evidence="1"/>
<dbReference type="EMBL" id="CR628336">
    <property type="protein sequence ID" value="CAH12352.1"/>
    <property type="molecule type" value="Genomic_DNA"/>
</dbReference>
<dbReference type="RefSeq" id="WP_011213552.1">
    <property type="nucleotide sequence ID" value="NC_006368.1"/>
</dbReference>
<dbReference type="SMR" id="Q5X5W9"/>
<dbReference type="KEGG" id="lpp:lpp1201"/>
<dbReference type="LegioList" id="lpp1201"/>
<dbReference type="HOGENOM" id="CLU_006732_3_0_6"/>
<dbReference type="UniPathway" id="UPA00031">
    <property type="reaction ID" value="UER00014"/>
</dbReference>
<dbReference type="GO" id="GO:0005829">
    <property type="term" value="C:cytosol"/>
    <property type="evidence" value="ECO:0007669"/>
    <property type="project" value="TreeGrafter"/>
</dbReference>
<dbReference type="GO" id="GO:0004399">
    <property type="term" value="F:histidinol dehydrogenase activity"/>
    <property type="evidence" value="ECO:0007669"/>
    <property type="project" value="UniProtKB-UniRule"/>
</dbReference>
<dbReference type="GO" id="GO:0051287">
    <property type="term" value="F:NAD binding"/>
    <property type="evidence" value="ECO:0007669"/>
    <property type="project" value="InterPro"/>
</dbReference>
<dbReference type="GO" id="GO:0008270">
    <property type="term" value="F:zinc ion binding"/>
    <property type="evidence" value="ECO:0007669"/>
    <property type="project" value="UniProtKB-UniRule"/>
</dbReference>
<dbReference type="GO" id="GO:0000105">
    <property type="term" value="P:L-histidine biosynthetic process"/>
    <property type="evidence" value="ECO:0007669"/>
    <property type="project" value="UniProtKB-UniRule"/>
</dbReference>
<dbReference type="CDD" id="cd06572">
    <property type="entry name" value="Histidinol_dh"/>
    <property type="match status" value="1"/>
</dbReference>
<dbReference type="FunFam" id="3.40.50.1980:FF:000001">
    <property type="entry name" value="Histidinol dehydrogenase"/>
    <property type="match status" value="1"/>
</dbReference>
<dbReference type="FunFam" id="1.20.5.1300:FF:000002">
    <property type="entry name" value="Histidinol dehydrogenase, chloroplastic"/>
    <property type="match status" value="1"/>
</dbReference>
<dbReference type="Gene3D" id="1.20.5.1300">
    <property type="match status" value="1"/>
</dbReference>
<dbReference type="Gene3D" id="3.40.50.1980">
    <property type="entry name" value="Nitrogenase molybdenum iron protein domain"/>
    <property type="match status" value="2"/>
</dbReference>
<dbReference type="HAMAP" id="MF_01024">
    <property type="entry name" value="HisD"/>
    <property type="match status" value="1"/>
</dbReference>
<dbReference type="InterPro" id="IPR016161">
    <property type="entry name" value="Ald_DH/histidinol_DH"/>
</dbReference>
<dbReference type="InterPro" id="IPR001692">
    <property type="entry name" value="Histidinol_DH_CS"/>
</dbReference>
<dbReference type="InterPro" id="IPR022695">
    <property type="entry name" value="Histidinol_DH_monofunct"/>
</dbReference>
<dbReference type="InterPro" id="IPR012131">
    <property type="entry name" value="Hstdl_DH"/>
</dbReference>
<dbReference type="NCBIfam" id="TIGR00069">
    <property type="entry name" value="hisD"/>
    <property type="match status" value="1"/>
</dbReference>
<dbReference type="PANTHER" id="PTHR21256:SF2">
    <property type="entry name" value="HISTIDINE BIOSYNTHESIS TRIFUNCTIONAL PROTEIN"/>
    <property type="match status" value="1"/>
</dbReference>
<dbReference type="PANTHER" id="PTHR21256">
    <property type="entry name" value="HISTIDINOL DEHYDROGENASE HDH"/>
    <property type="match status" value="1"/>
</dbReference>
<dbReference type="Pfam" id="PF00815">
    <property type="entry name" value="Histidinol_dh"/>
    <property type="match status" value="1"/>
</dbReference>
<dbReference type="PIRSF" id="PIRSF000099">
    <property type="entry name" value="Histidinol_dh"/>
    <property type="match status" value="1"/>
</dbReference>
<dbReference type="PRINTS" id="PR00083">
    <property type="entry name" value="HOLDHDRGNASE"/>
</dbReference>
<dbReference type="SUPFAM" id="SSF53720">
    <property type="entry name" value="ALDH-like"/>
    <property type="match status" value="1"/>
</dbReference>
<dbReference type="PROSITE" id="PS00611">
    <property type="entry name" value="HISOL_DEHYDROGENASE"/>
    <property type="match status" value="1"/>
</dbReference>
<feature type="chain" id="PRO_0000135785" description="Histidinol dehydrogenase">
    <location>
        <begin position="1"/>
        <end position="431"/>
    </location>
</feature>
<feature type="active site" description="Proton acceptor" evidence="1">
    <location>
        <position position="325"/>
    </location>
</feature>
<feature type="active site" description="Proton acceptor" evidence="1">
    <location>
        <position position="326"/>
    </location>
</feature>
<feature type="binding site" evidence="1">
    <location>
        <position position="124"/>
    </location>
    <ligand>
        <name>NAD(+)</name>
        <dbReference type="ChEBI" id="CHEBI:57540"/>
    </ligand>
</feature>
<feature type="binding site" evidence="1">
    <location>
        <position position="187"/>
    </location>
    <ligand>
        <name>NAD(+)</name>
        <dbReference type="ChEBI" id="CHEBI:57540"/>
    </ligand>
</feature>
<feature type="binding site" evidence="1">
    <location>
        <position position="210"/>
    </location>
    <ligand>
        <name>NAD(+)</name>
        <dbReference type="ChEBI" id="CHEBI:57540"/>
    </ligand>
</feature>
<feature type="binding site" evidence="1">
    <location>
        <position position="236"/>
    </location>
    <ligand>
        <name>substrate</name>
    </ligand>
</feature>
<feature type="binding site" evidence="1">
    <location>
        <position position="258"/>
    </location>
    <ligand>
        <name>substrate</name>
    </ligand>
</feature>
<feature type="binding site" evidence="1">
    <location>
        <position position="258"/>
    </location>
    <ligand>
        <name>Zn(2+)</name>
        <dbReference type="ChEBI" id="CHEBI:29105"/>
    </ligand>
</feature>
<feature type="binding site" evidence="1">
    <location>
        <position position="261"/>
    </location>
    <ligand>
        <name>substrate</name>
    </ligand>
</feature>
<feature type="binding site" evidence="1">
    <location>
        <position position="261"/>
    </location>
    <ligand>
        <name>Zn(2+)</name>
        <dbReference type="ChEBI" id="CHEBI:29105"/>
    </ligand>
</feature>
<feature type="binding site" evidence="1">
    <location>
        <position position="326"/>
    </location>
    <ligand>
        <name>substrate</name>
    </ligand>
</feature>
<feature type="binding site" evidence="1">
    <location>
        <position position="359"/>
    </location>
    <ligand>
        <name>substrate</name>
    </ligand>
</feature>
<feature type="binding site" evidence="1">
    <location>
        <position position="359"/>
    </location>
    <ligand>
        <name>Zn(2+)</name>
        <dbReference type="ChEBI" id="CHEBI:29105"/>
    </ligand>
</feature>
<feature type="binding site" evidence="1">
    <location>
        <position position="413"/>
    </location>
    <ligand>
        <name>substrate</name>
    </ligand>
</feature>
<feature type="binding site" evidence="1">
    <location>
        <position position="418"/>
    </location>
    <ligand>
        <name>substrate</name>
    </ligand>
</feature>
<feature type="binding site" evidence="1">
    <location>
        <position position="418"/>
    </location>
    <ligand>
        <name>Zn(2+)</name>
        <dbReference type="ChEBI" id="CHEBI:29105"/>
    </ligand>
</feature>
<organism>
    <name type="scientific">Legionella pneumophila (strain Paris)</name>
    <dbReference type="NCBI Taxonomy" id="297246"/>
    <lineage>
        <taxon>Bacteria</taxon>
        <taxon>Pseudomonadati</taxon>
        <taxon>Pseudomonadota</taxon>
        <taxon>Gammaproteobacteria</taxon>
        <taxon>Legionellales</taxon>
        <taxon>Legionellaceae</taxon>
        <taxon>Legionella</taxon>
    </lineage>
</organism>
<protein>
    <recommendedName>
        <fullName evidence="1">Histidinol dehydrogenase</fullName>
        <shortName evidence="1">HDH</shortName>
        <ecNumber evidence="1">1.1.1.23</ecNumber>
    </recommendedName>
</protein>
<reference key="1">
    <citation type="journal article" date="2004" name="Nat. Genet.">
        <title>Evidence in the Legionella pneumophila genome for exploitation of host cell functions and high genome plasticity.</title>
        <authorList>
            <person name="Cazalet C."/>
            <person name="Rusniok C."/>
            <person name="Brueggemann H."/>
            <person name="Zidane N."/>
            <person name="Magnier A."/>
            <person name="Ma L."/>
            <person name="Tichit M."/>
            <person name="Jarraud S."/>
            <person name="Bouchier C."/>
            <person name="Vandenesch F."/>
            <person name="Kunst F."/>
            <person name="Etienne J."/>
            <person name="Glaser P."/>
            <person name="Buchrieser C."/>
        </authorList>
    </citation>
    <scope>NUCLEOTIDE SEQUENCE [LARGE SCALE GENOMIC DNA]</scope>
    <source>
        <strain>Paris</strain>
    </source>
</reference>
<comment type="function">
    <text evidence="1">Catalyzes the sequential NAD-dependent oxidations of L-histidinol to L-histidinaldehyde and then to L-histidine.</text>
</comment>
<comment type="catalytic activity">
    <reaction evidence="1">
        <text>L-histidinol + 2 NAD(+) + H2O = L-histidine + 2 NADH + 3 H(+)</text>
        <dbReference type="Rhea" id="RHEA:20641"/>
        <dbReference type="ChEBI" id="CHEBI:15377"/>
        <dbReference type="ChEBI" id="CHEBI:15378"/>
        <dbReference type="ChEBI" id="CHEBI:57540"/>
        <dbReference type="ChEBI" id="CHEBI:57595"/>
        <dbReference type="ChEBI" id="CHEBI:57699"/>
        <dbReference type="ChEBI" id="CHEBI:57945"/>
        <dbReference type="EC" id="1.1.1.23"/>
    </reaction>
</comment>
<comment type="cofactor">
    <cofactor evidence="1">
        <name>Zn(2+)</name>
        <dbReference type="ChEBI" id="CHEBI:29105"/>
    </cofactor>
    <text evidence="1">Binds 1 zinc ion per subunit.</text>
</comment>
<comment type="pathway">
    <text evidence="1">Amino-acid biosynthesis; L-histidine biosynthesis; L-histidine from 5-phospho-alpha-D-ribose 1-diphosphate: step 9/9.</text>
</comment>
<comment type="similarity">
    <text evidence="1">Belongs to the histidinol dehydrogenase family.</text>
</comment>
<gene>
    <name evidence="1" type="primary">hisD</name>
    <name type="ordered locus">lpp1201</name>
</gene>
<keyword id="KW-0028">Amino-acid biosynthesis</keyword>
<keyword id="KW-0368">Histidine biosynthesis</keyword>
<keyword id="KW-0479">Metal-binding</keyword>
<keyword id="KW-0520">NAD</keyword>
<keyword id="KW-0560">Oxidoreductase</keyword>
<keyword id="KW-0862">Zinc</keyword>
<accession>Q5X5W9</accession>